<organism>
    <name type="scientific">Homo sapiens</name>
    <name type="common">Human</name>
    <dbReference type="NCBI Taxonomy" id="9606"/>
    <lineage>
        <taxon>Eukaryota</taxon>
        <taxon>Metazoa</taxon>
        <taxon>Chordata</taxon>
        <taxon>Craniata</taxon>
        <taxon>Vertebrata</taxon>
        <taxon>Euteleostomi</taxon>
        <taxon>Mammalia</taxon>
        <taxon>Eutheria</taxon>
        <taxon>Euarchontoglires</taxon>
        <taxon>Primates</taxon>
        <taxon>Haplorrhini</taxon>
        <taxon>Catarrhini</taxon>
        <taxon>Hominidae</taxon>
        <taxon>Homo</taxon>
    </lineage>
</organism>
<comment type="function">
    <text evidence="5 7">Has a role in alternative splicing and transcription regulation (PubMed:29522154). Involved in both constitutive and alternative pre-mRNA splicing. May have a role in the recognition of the 3' splice site during the second step of splicing.</text>
</comment>
<comment type="subunit">
    <text evidence="5">Interacts (via Arg/Ser-rich domain) with LUC7L3, RBM39 and RSF1.</text>
</comment>
<comment type="interaction">
    <interactant intactId="EBI-712189">
        <id>Q96IZ7</id>
    </interactant>
    <interactant intactId="EBI-8464037">
        <id>Q6NYC1</id>
        <label>JMJD6</label>
    </interactant>
    <organismsDiffer>false</organismsDiffer>
    <experiments>4</experiments>
</comment>
<comment type="interaction">
    <interactant intactId="EBI-712189">
        <id>Q96IZ7</id>
    </interactant>
    <interactant intactId="EBI-21591415">
        <id>P13473-2</id>
        <label>LAMP2</label>
    </interactant>
    <organismsDiffer>false</organismsDiffer>
    <experiments>3</experiments>
</comment>
<comment type="interaction">
    <interactant intactId="EBI-712189">
        <id>Q96IZ7</id>
    </interactant>
    <interactant intactId="EBI-5280197">
        <id>O75400-2</id>
        <label>PRPF40A</label>
    </interactant>
    <organismsDiffer>false</organismsDiffer>
    <experiments>3</experiments>
</comment>
<comment type="interaction">
    <interactant intactId="EBI-712189">
        <id>Q96IZ7</id>
    </interactant>
    <interactant intactId="EBI-286642">
        <id>P62826</id>
        <label>RAN</label>
    </interactant>
    <organismsDiffer>false</organismsDiffer>
    <experiments>3</experiments>
</comment>
<comment type="interaction">
    <interactant intactId="EBI-712189">
        <id>Q96IZ7</id>
    </interactant>
    <interactant intactId="EBI-593303">
        <id>P78362</id>
        <label>SRPK2</label>
    </interactant>
    <organismsDiffer>false</organismsDiffer>
    <experiments>2</experiments>
</comment>
<comment type="interaction">
    <interactant intactId="EBI-712189">
        <id>Q96IZ7</id>
    </interactant>
    <interactant intactId="EBI-3867173">
        <id>A7MD48</id>
        <label>SRRM4</label>
    </interactant>
    <organismsDiffer>false</organismsDiffer>
    <experiments>3</experiments>
</comment>
<comment type="subcellular location">
    <subcellularLocation>
        <location evidence="1">Nucleus</location>
    </subcellularLocation>
    <subcellularLocation>
        <location evidence="1">Nucleus speckle</location>
    </subcellularLocation>
    <subcellularLocation>
        <location evidence="1">Cytoplasm</location>
    </subcellularLocation>
    <text evidence="1">Shuttles between the nucleus and cytoplasm.</text>
</comment>
<comment type="alternative products">
    <event type="alternative splicing"/>
    <isoform>
        <id>Q96IZ7-1</id>
        <name>1</name>
        <sequence type="displayed"/>
    </isoform>
    <isoform>
        <id>Q96IZ7-2</id>
        <name>2</name>
        <sequence type="described" ref="VSP_013120"/>
    </isoform>
</comment>
<comment type="tissue specificity">
    <text evidence="7">Widely expressed. Expressed in brain, spinal cord, cerebellum.</text>
</comment>
<comment type="PTM">
    <text evidence="2">Phosphorylated.</text>
</comment>
<comment type="disease" evidence="6 7">
    <disease id="DI-05524">
        <name>Intellectual developmental disorder, autosomal recessive 70</name>
        <acronym>MRT70</acronym>
        <description>A form of intellectual disability, a disorder characterized by significantly below average general intellectual functioning associated with impairments in adaptive behavior and manifested during the developmental period. MRT70 patients manifest impaired intellectual development, mild facial dysmorphism, febrile seizures, and behavioral abnormalities.</description>
        <dbReference type="MIM" id="618402"/>
    </disease>
    <text>The disease is caused by variants affecting the gene represented in this entry.</text>
</comment>
<comment type="sequence caution" evidence="9">
    <conflict type="frameshift">
        <sequence resource="EMBL-CDS" id="AAF64267"/>
    </conflict>
</comment>
<keyword id="KW-0025">Alternative splicing</keyword>
<keyword id="KW-0175">Coiled coil</keyword>
<keyword id="KW-0963">Cytoplasm</keyword>
<keyword id="KW-0225">Disease variant</keyword>
<keyword id="KW-0991">Intellectual disability</keyword>
<keyword id="KW-0507">mRNA processing</keyword>
<keyword id="KW-0508">mRNA splicing</keyword>
<keyword id="KW-0539">Nucleus</keyword>
<keyword id="KW-0597">Phosphoprotein</keyword>
<keyword id="KW-1267">Proteomics identification</keyword>
<keyword id="KW-1185">Reference proteome</keyword>
<accession>Q96IZ7</accession>
<accession>A8K2R9</accession>
<accession>Q96QK2</accession>
<accession>Q9NZE5</accession>
<protein>
    <recommendedName>
        <fullName>Serine/Arginine-related protein 53</fullName>
        <shortName>SRrp53</shortName>
    </recommendedName>
    <alternativeName>
        <fullName>Arginine/serine-rich coiled-coil protein 1</fullName>
    </alternativeName>
</protein>
<proteinExistence type="evidence at protein level"/>
<dbReference type="EMBL" id="AK290334">
    <property type="protein sequence ID" value="BAF83023.1"/>
    <property type="molecule type" value="mRNA"/>
</dbReference>
<dbReference type="EMBL" id="BC006982">
    <property type="protein sequence ID" value="AAH06982.1"/>
    <property type="molecule type" value="mRNA"/>
</dbReference>
<dbReference type="EMBL" id="BC010357">
    <property type="protein sequence ID" value="AAH10357.1"/>
    <property type="molecule type" value="mRNA"/>
</dbReference>
<dbReference type="EMBL" id="AF208853">
    <property type="protein sequence ID" value="AAF64267.1"/>
    <property type="status" value="ALT_FRAME"/>
    <property type="molecule type" value="mRNA"/>
</dbReference>
<dbReference type="CCDS" id="CCDS3181.1">
    <molecule id="Q96IZ7-1"/>
</dbReference>
<dbReference type="CCDS" id="CCDS63822.1">
    <molecule id="Q96IZ7-2"/>
</dbReference>
<dbReference type="RefSeq" id="NP_001258763.1">
    <molecule id="Q96IZ7-2"/>
    <property type="nucleotide sequence ID" value="NM_001271834.2"/>
</dbReference>
<dbReference type="RefSeq" id="NP_001258767.1">
    <molecule id="Q96IZ7-1"/>
    <property type="nucleotide sequence ID" value="NM_001271838.2"/>
</dbReference>
<dbReference type="RefSeq" id="NP_057709.2">
    <molecule id="Q96IZ7-1"/>
    <property type="nucleotide sequence ID" value="NM_016625.3"/>
</dbReference>
<dbReference type="RefSeq" id="XP_047304231.1">
    <molecule id="Q96IZ7-1"/>
    <property type="nucleotide sequence ID" value="XM_047448275.1"/>
</dbReference>
<dbReference type="RefSeq" id="XP_054202748.1">
    <molecule id="Q96IZ7-1"/>
    <property type="nucleotide sequence ID" value="XM_054346773.1"/>
</dbReference>
<dbReference type="SMR" id="Q96IZ7"/>
<dbReference type="BioGRID" id="119470">
    <property type="interactions" value="216"/>
</dbReference>
<dbReference type="FunCoup" id="Q96IZ7">
    <property type="interactions" value="2613"/>
</dbReference>
<dbReference type="IntAct" id="Q96IZ7">
    <property type="interactions" value="78"/>
</dbReference>
<dbReference type="MINT" id="Q96IZ7"/>
<dbReference type="STRING" id="9606.ENSP00000481697"/>
<dbReference type="GlyGen" id="Q96IZ7">
    <property type="glycosylation" value="2 sites, 1 O-linked glycan (2 sites)"/>
</dbReference>
<dbReference type="iPTMnet" id="Q96IZ7"/>
<dbReference type="PhosphoSitePlus" id="Q96IZ7"/>
<dbReference type="BioMuta" id="RSRC1"/>
<dbReference type="DMDM" id="61216831"/>
<dbReference type="jPOST" id="Q96IZ7"/>
<dbReference type="MassIVE" id="Q96IZ7"/>
<dbReference type="PaxDb" id="9606-ENSP00000481697"/>
<dbReference type="PeptideAtlas" id="Q96IZ7"/>
<dbReference type="ProteomicsDB" id="76879">
    <molecule id="Q96IZ7-1"/>
</dbReference>
<dbReference type="ProteomicsDB" id="76880">
    <molecule id="Q96IZ7-2"/>
</dbReference>
<dbReference type="Pumba" id="Q96IZ7"/>
<dbReference type="Antibodypedia" id="46770">
    <property type="antibodies" value="76 antibodies from 23 providers"/>
</dbReference>
<dbReference type="DNASU" id="51319"/>
<dbReference type="Ensembl" id="ENST00000295930.7">
    <molecule id="Q96IZ7-1"/>
    <property type="protein sequence ID" value="ENSP00000295930.3"/>
    <property type="gene ID" value="ENSG00000174891.14"/>
</dbReference>
<dbReference type="Ensembl" id="ENST00000312179.10">
    <molecule id="Q96IZ7-2"/>
    <property type="protein sequence ID" value="ENSP00000308671.6"/>
    <property type="gene ID" value="ENSG00000174891.14"/>
</dbReference>
<dbReference type="Ensembl" id="ENST00000464171.5">
    <molecule id="Q96IZ7-2"/>
    <property type="protein sequence ID" value="ENSP00000419794.1"/>
    <property type="gene ID" value="ENSG00000174891.14"/>
</dbReference>
<dbReference type="Ensembl" id="ENST00000480820.5">
    <molecule id="Q96IZ7-1"/>
    <property type="protein sequence ID" value="ENSP00000420150.1"/>
    <property type="gene ID" value="ENSG00000174891.14"/>
</dbReference>
<dbReference type="Ensembl" id="ENST00000611884.5">
    <molecule id="Q96IZ7-1"/>
    <property type="protein sequence ID" value="ENSP00000481697.1"/>
    <property type="gene ID" value="ENSG00000174891.14"/>
</dbReference>
<dbReference type="GeneID" id="51319"/>
<dbReference type="KEGG" id="hsa:51319"/>
<dbReference type="MANE-Select" id="ENST00000611884.5">
    <property type="protein sequence ID" value="ENSP00000481697.1"/>
    <property type="RefSeq nucleotide sequence ID" value="NM_001271838.2"/>
    <property type="RefSeq protein sequence ID" value="NP_001258767.1"/>
</dbReference>
<dbReference type="UCSC" id="uc003fbt.4">
    <molecule id="Q96IZ7-1"/>
    <property type="organism name" value="human"/>
</dbReference>
<dbReference type="AGR" id="HGNC:24152"/>
<dbReference type="CTD" id="51319"/>
<dbReference type="DisGeNET" id="51319"/>
<dbReference type="GeneCards" id="RSRC1"/>
<dbReference type="HGNC" id="HGNC:24152">
    <property type="gene designation" value="RSRC1"/>
</dbReference>
<dbReference type="HPA" id="ENSG00000174891">
    <property type="expression patterns" value="Low tissue specificity"/>
</dbReference>
<dbReference type="MalaCards" id="RSRC1"/>
<dbReference type="MIM" id="613352">
    <property type="type" value="gene"/>
</dbReference>
<dbReference type="MIM" id="618402">
    <property type="type" value="phenotype"/>
</dbReference>
<dbReference type="neXtProt" id="NX_Q96IZ7"/>
<dbReference type="OpenTargets" id="ENSG00000174891"/>
<dbReference type="Orphanet" id="88616">
    <property type="disease" value="Autosomal recessive non-syndromic intellectual disability"/>
</dbReference>
<dbReference type="PharmGKB" id="PA142670969"/>
<dbReference type="VEuPathDB" id="HostDB:ENSG00000174891"/>
<dbReference type="eggNOG" id="KOG3406">
    <property type="taxonomic scope" value="Eukaryota"/>
</dbReference>
<dbReference type="GeneTree" id="ENSGT00730000111251"/>
<dbReference type="InParanoid" id="Q96IZ7"/>
<dbReference type="OrthoDB" id="9946564at2759"/>
<dbReference type="PAN-GO" id="Q96IZ7">
    <property type="GO annotations" value="3 GO annotations based on evolutionary models"/>
</dbReference>
<dbReference type="PhylomeDB" id="Q96IZ7"/>
<dbReference type="TreeFam" id="TF336021"/>
<dbReference type="PathwayCommons" id="Q96IZ7"/>
<dbReference type="SignaLink" id="Q96IZ7"/>
<dbReference type="BioGRID-ORCS" id="51319">
    <property type="hits" value="11 hits in 1161 CRISPR screens"/>
</dbReference>
<dbReference type="ChiTaRS" id="RSRC1">
    <property type="organism name" value="human"/>
</dbReference>
<dbReference type="GenomeRNAi" id="51319"/>
<dbReference type="Pharos" id="Q96IZ7">
    <property type="development level" value="Tbio"/>
</dbReference>
<dbReference type="PRO" id="PR:Q96IZ7"/>
<dbReference type="Proteomes" id="UP000005640">
    <property type="component" value="Chromosome 3"/>
</dbReference>
<dbReference type="RNAct" id="Q96IZ7">
    <property type="molecule type" value="protein"/>
</dbReference>
<dbReference type="Bgee" id="ENSG00000174891">
    <property type="expression patterns" value="Expressed in calcaneal tendon and 183 other cell types or tissues"/>
</dbReference>
<dbReference type="ExpressionAtlas" id="Q96IZ7">
    <property type="expression patterns" value="baseline and differential"/>
</dbReference>
<dbReference type="GO" id="GO:0005737">
    <property type="term" value="C:cytoplasm"/>
    <property type="evidence" value="ECO:0000250"/>
    <property type="project" value="UniProtKB"/>
</dbReference>
<dbReference type="GO" id="GO:0016607">
    <property type="term" value="C:nuclear speck"/>
    <property type="evidence" value="ECO:0000250"/>
    <property type="project" value="UniProtKB"/>
</dbReference>
<dbReference type="GO" id="GO:0005634">
    <property type="term" value="C:nucleus"/>
    <property type="evidence" value="ECO:0000250"/>
    <property type="project" value="UniProtKB"/>
</dbReference>
<dbReference type="GO" id="GO:0000380">
    <property type="term" value="P:alternative mRNA splicing, via spliceosome"/>
    <property type="evidence" value="ECO:0000318"/>
    <property type="project" value="GO_Central"/>
</dbReference>
<dbReference type="GO" id="GO:0000398">
    <property type="term" value="P:mRNA splicing, via spliceosome"/>
    <property type="evidence" value="ECO:0000314"/>
    <property type="project" value="UniProtKB"/>
</dbReference>
<dbReference type="GO" id="GO:0006913">
    <property type="term" value="P:nucleocytoplasmic transport"/>
    <property type="evidence" value="ECO:0000250"/>
    <property type="project" value="UniProtKB"/>
</dbReference>
<dbReference type="GO" id="GO:0046677">
    <property type="term" value="P:response to antibiotic"/>
    <property type="evidence" value="ECO:0007669"/>
    <property type="project" value="Ensembl"/>
</dbReference>
<dbReference type="GO" id="GO:0008380">
    <property type="term" value="P:RNA splicing"/>
    <property type="evidence" value="ECO:0000314"/>
    <property type="project" value="MGI"/>
</dbReference>
<dbReference type="InterPro" id="IPR034604">
    <property type="entry name" value="SRRP53"/>
</dbReference>
<dbReference type="PANTHER" id="PTHR31968">
    <property type="entry name" value="SERINE/ARGININE-RELATED PROTEIN 53"/>
    <property type="match status" value="1"/>
</dbReference>
<dbReference type="PANTHER" id="PTHR31968:SF4">
    <property type="entry name" value="SERINE_ARGININE-RELATED PROTEIN 53"/>
    <property type="match status" value="1"/>
</dbReference>
<reference key="1">
    <citation type="journal article" date="2004" name="Nat. Genet.">
        <title>Complete sequencing and characterization of 21,243 full-length human cDNAs.</title>
        <authorList>
            <person name="Ota T."/>
            <person name="Suzuki Y."/>
            <person name="Nishikawa T."/>
            <person name="Otsuki T."/>
            <person name="Sugiyama T."/>
            <person name="Irie R."/>
            <person name="Wakamatsu A."/>
            <person name="Hayashi K."/>
            <person name="Sato H."/>
            <person name="Nagai K."/>
            <person name="Kimura K."/>
            <person name="Makita H."/>
            <person name="Sekine M."/>
            <person name="Obayashi M."/>
            <person name="Nishi T."/>
            <person name="Shibahara T."/>
            <person name="Tanaka T."/>
            <person name="Ishii S."/>
            <person name="Yamamoto J."/>
            <person name="Saito K."/>
            <person name="Kawai Y."/>
            <person name="Isono Y."/>
            <person name="Nakamura Y."/>
            <person name="Nagahari K."/>
            <person name="Murakami K."/>
            <person name="Yasuda T."/>
            <person name="Iwayanagi T."/>
            <person name="Wagatsuma M."/>
            <person name="Shiratori A."/>
            <person name="Sudo H."/>
            <person name="Hosoiri T."/>
            <person name="Kaku Y."/>
            <person name="Kodaira H."/>
            <person name="Kondo H."/>
            <person name="Sugawara M."/>
            <person name="Takahashi M."/>
            <person name="Kanda K."/>
            <person name="Yokoi T."/>
            <person name="Furuya T."/>
            <person name="Kikkawa E."/>
            <person name="Omura Y."/>
            <person name="Abe K."/>
            <person name="Kamihara K."/>
            <person name="Katsuta N."/>
            <person name="Sato K."/>
            <person name="Tanikawa M."/>
            <person name="Yamazaki M."/>
            <person name="Ninomiya K."/>
            <person name="Ishibashi T."/>
            <person name="Yamashita H."/>
            <person name="Murakawa K."/>
            <person name="Fujimori K."/>
            <person name="Tanai H."/>
            <person name="Kimata M."/>
            <person name="Watanabe M."/>
            <person name="Hiraoka S."/>
            <person name="Chiba Y."/>
            <person name="Ishida S."/>
            <person name="Ono Y."/>
            <person name="Takiguchi S."/>
            <person name="Watanabe S."/>
            <person name="Yosida M."/>
            <person name="Hotuta T."/>
            <person name="Kusano J."/>
            <person name="Kanehori K."/>
            <person name="Takahashi-Fujii A."/>
            <person name="Hara H."/>
            <person name="Tanase T.-O."/>
            <person name="Nomura Y."/>
            <person name="Togiya S."/>
            <person name="Komai F."/>
            <person name="Hara R."/>
            <person name="Takeuchi K."/>
            <person name="Arita M."/>
            <person name="Imose N."/>
            <person name="Musashino K."/>
            <person name="Yuuki H."/>
            <person name="Oshima A."/>
            <person name="Sasaki N."/>
            <person name="Aotsuka S."/>
            <person name="Yoshikawa Y."/>
            <person name="Matsunawa H."/>
            <person name="Ichihara T."/>
            <person name="Shiohata N."/>
            <person name="Sano S."/>
            <person name="Moriya S."/>
            <person name="Momiyama H."/>
            <person name="Satoh N."/>
            <person name="Takami S."/>
            <person name="Terashima Y."/>
            <person name="Suzuki O."/>
            <person name="Nakagawa S."/>
            <person name="Senoh A."/>
            <person name="Mizoguchi H."/>
            <person name="Goto Y."/>
            <person name="Shimizu F."/>
            <person name="Wakebe H."/>
            <person name="Hishigaki H."/>
            <person name="Watanabe T."/>
            <person name="Sugiyama A."/>
            <person name="Takemoto M."/>
            <person name="Kawakami B."/>
            <person name="Yamazaki M."/>
            <person name="Watanabe K."/>
            <person name="Kumagai A."/>
            <person name="Itakura S."/>
            <person name="Fukuzumi Y."/>
            <person name="Fujimori Y."/>
            <person name="Komiyama M."/>
            <person name="Tashiro H."/>
            <person name="Tanigami A."/>
            <person name="Fujiwara T."/>
            <person name="Ono T."/>
            <person name="Yamada K."/>
            <person name="Fujii Y."/>
            <person name="Ozaki K."/>
            <person name="Hirao M."/>
            <person name="Ohmori Y."/>
            <person name="Kawabata A."/>
            <person name="Hikiji T."/>
            <person name="Kobatake N."/>
            <person name="Inagaki H."/>
            <person name="Ikema Y."/>
            <person name="Okamoto S."/>
            <person name="Okitani R."/>
            <person name="Kawakami T."/>
            <person name="Noguchi S."/>
            <person name="Itoh T."/>
            <person name="Shigeta K."/>
            <person name="Senba T."/>
            <person name="Matsumura K."/>
            <person name="Nakajima Y."/>
            <person name="Mizuno T."/>
            <person name="Morinaga M."/>
            <person name="Sasaki M."/>
            <person name="Togashi T."/>
            <person name="Oyama M."/>
            <person name="Hata H."/>
            <person name="Watanabe M."/>
            <person name="Komatsu T."/>
            <person name="Mizushima-Sugano J."/>
            <person name="Satoh T."/>
            <person name="Shirai Y."/>
            <person name="Takahashi Y."/>
            <person name="Nakagawa K."/>
            <person name="Okumura K."/>
            <person name="Nagase T."/>
            <person name="Nomura N."/>
            <person name="Kikuchi H."/>
            <person name="Masuho Y."/>
            <person name="Yamashita R."/>
            <person name="Nakai K."/>
            <person name="Yada T."/>
            <person name="Nakamura Y."/>
            <person name="Ohara O."/>
            <person name="Isogai T."/>
            <person name="Sugano S."/>
        </authorList>
    </citation>
    <scope>NUCLEOTIDE SEQUENCE [LARGE SCALE MRNA] (ISOFORM 1)</scope>
    <source>
        <tissue>Tongue</tissue>
    </source>
</reference>
<reference key="2">
    <citation type="journal article" date="2004" name="Genome Res.">
        <title>The status, quality, and expansion of the NIH full-length cDNA project: the Mammalian Gene Collection (MGC).</title>
        <authorList>
            <consortium name="The MGC Project Team"/>
        </authorList>
    </citation>
    <scope>NUCLEOTIDE SEQUENCE [LARGE SCALE MRNA] (ISOFORMS 1 AND 2)</scope>
    <source>
        <tissue>Prostate</tissue>
        <tissue>Urinary bladder</tissue>
    </source>
</reference>
<reference key="3">
    <citation type="submission" date="1999-11" db="EMBL/GenBank/DDBJ databases">
        <title>A novel gene expressed in human bone marrow.</title>
        <authorList>
            <person name="Zhao M."/>
            <person name="Song H."/>
            <person name="Li N."/>
            <person name="Peng Y."/>
            <person name="Han Z."/>
            <person name="Chen Z."/>
        </authorList>
    </citation>
    <scope>NUCLEOTIDE SEQUENCE [MRNA] OF 1-203</scope>
    <source>
        <tissue>Bone marrow</tissue>
    </source>
</reference>
<reference key="4">
    <citation type="journal article" date="2005" name="Mol. Cell. Biol.">
        <title>A novel SR-related protein is required for the second step of pre-mRNA splicing.</title>
        <authorList>
            <person name="Cazalla D."/>
            <person name="Newton K."/>
            <person name="Caceres J.F."/>
        </authorList>
    </citation>
    <scope>FUNCTION</scope>
    <scope>INTERACTION WITH RBM39; LUC7L3 AND RSF1</scope>
</reference>
<reference key="5">
    <citation type="journal article" date="2011" name="Sci. Signal.">
        <title>System-wide temporal characterization of the proteome and phosphoproteome of human embryonic stem cell differentiation.</title>
        <authorList>
            <person name="Rigbolt K.T."/>
            <person name="Prokhorova T.A."/>
            <person name="Akimov V."/>
            <person name="Henningsen J."/>
            <person name="Johansen P.T."/>
            <person name="Kratchmarova I."/>
            <person name="Kassem M."/>
            <person name="Mann M."/>
            <person name="Olsen J.V."/>
            <person name="Blagoev B."/>
        </authorList>
    </citation>
    <scope>IDENTIFICATION BY MASS SPECTROMETRY [LARGE SCALE ANALYSIS]</scope>
</reference>
<reference key="6">
    <citation type="journal article" date="2018" name="Brain">
        <title>RSRC1 mutation affects intellect and behaviour through aberrant splicing and transcription, downregulating IGFBP3.</title>
        <authorList>
            <person name="Perez Y."/>
            <person name="Menascu S."/>
            <person name="Cohen I."/>
            <person name="Kadir R."/>
            <person name="Basha O."/>
            <person name="Shorer Z."/>
            <person name="Romi H."/>
            <person name="Meiri G."/>
            <person name="Rabinski T."/>
            <person name="Ofir R."/>
            <person name="Yeger-Lotem E."/>
            <person name="Birk O.S."/>
        </authorList>
    </citation>
    <scope>FUNCTION</scope>
    <scope>TISSUE SPECIFICITY</scope>
    <scope>INVOLVEMENT IN MRT70</scope>
    <scope>VARIANT MRT70 60-HIS--ALA-334 DEL</scope>
    <scope>CHARACTERIZATION OF VARIANT MRT70 69-ARG--ALA-334 DEL</scope>
</reference>
<reference key="7">
    <citation type="journal article" date="2018" name="Genet. Med.">
        <title>GWAS signals revisited using human knockouts.</title>
        <authorList>
            <person name="Maddirevula S."/>
            <person name="Alzahrani F."/>
            <person name="Anazi S."/>
            <person name="Almureikhi M."/>
            <person name="Ben-Omran T."/>
            <person name="Abdel-Salam G.M.H."/>
            <person name="Hashem M."/>
            <person name="Ibrahim N."/>
            <person name="Abdulwahab F.M."/>
            <person name="Meriki N."/>
            <person name="Bashiri F.A."/>
            <person name="Thong M.K."/>
            <person name="Muthukumarasamy P."/>
            <person name="Azwani Mazlan R."/>
            <person name="Shaheen R."/>
            <person name="Alkuraya F.S."/>
        </authorList>
    </citation>
    <scope>VARIANT MRT70 90-ARG--ALA-334 DEL</scope>
</reference>
<name>RSRC1_HUMAN</name>
<sequence length="334" mass="38677">MGRRSSDTEEESRSKRKKKHRRRSSSSSSSDSRTYSRKKGGRKSRSKSRSWSRDLQPRSHSYDRRRRHRSSSSSSYGSRRKRSRSRSRGRGKSYRVQRSRSKSRTRRSRSRPRLRSHSRSSERSSHRRTRSRSRDRERRKGRDKEKREKEKDKGKDKELHNIKRGESGNIKAGLEHLPPAEQAKARLQLVLEAAAKADEALKAKERNEEEAKRRKEEDQATLVEQVKRVKEIEAIESDSFVQQTFRSSKEVKKSVEPSEVKQATSTSGPASAVADPPSTEKEIDPTSIPTAIKYQDDNSLAHPNLFIEKADAEEKWFKRLIALRQERLMGSPVA</sequence>
<evidence type="ECO:0000250" key="1"/>
<evidence type="ECO:0000250" key="2">
    <source>
        <dbReference type="UniProtKB" id="Q9DBU6"/>
    </source>
</evidence>
<evidence type="ECO:0000255" key="3"/>
<evidence type="ECO:0000256" key="4">
    <source>
        <dbReference type="SAM" id="MobiDB-lite"/>
    </source>
</evidence>
<evidence type="ECO:0000269" key="5">
    <source>
    </source>
</evidence>
<evidence type="ECO:0000269" key="6">
    <source>
    </source>
</evidence>
<evidence type="ECO:0000269" key="7">
    <source>
    </source>
</evidence>
<evidence type="ECO:0000303" key="8">
    <source>
    </source>
</evidence>
<evidence type="ECO:0000305" key="9"/>
<gene>
    <name type="primary">RSRC1</name>
    <name type="synonym">SRRP53</name>
    <name type="ORF">BM-011</name>
</gene>
<feature type="chain" id="PRO_0000097496" description="Serine/Arginine-related protein 53">
    <location>
        <begin position="1"/>
        <end position="334"/>
    </location>
</feature>
<feature type="region of interest" description="Disordered" evidence="4">
    <location>
        <begin position="1"/>
        <end position="179"/>
    </location>
</feature>
<feature type="region of interest" description="Disordered" evidence="4">
    <location>
        <begin position="201"/>
        <end position="220"/>
    </location>
</feature>
<feature type="region of interest" description="Disordered" evidence="4">
    <location>
        <begin position="243"/>
        <end position="290"/>
    </location>
</feature>
<feature type="coiled-coil region" evidence="3">
    <location>
        <begin position="180"/>
        <end position="236"/>
    </location>
</feature>
<feature type="compositionally biased region" description="Basic and acidic residues" evidence="4">
    <location>
        <begin position="1"/>
        <end position="13"/>
    </location>
</feature>
<feature type="compositionally biased region" description="Basic residues" evidence="4">
    <location>
        <begin position="14"/>
        <end position="24"/>
    </location>
</feature>
<feature type="compositionally biased region" description="Basic residues" evidence="4">
    <location>
        <begin position="35"/>
        <end position="50"/>
    </location>
</feature>
<feature type="compositionally biased region" description="Basic and acidic residues" evidence="4">
    <location>
        <begin position="51"/>
        <end position="62"/>
    </location>
</feature>
<feature type="compositionally biased region" description="Basic residues" evidence="4">
    <location>
        <begin position="78"/>
        <end position="118"/>
    </location>
</feature>
<feature type="compositionally biased region" description="Basic and acidic residues" evidence="4">
    <location>
        <begin position="132"/>
        <end position="166"/>
    </location>
</feature>
<feature type="compositionally biased region" description="Basic and acidic residues" evidence="4">
    <location>
        <begin position="201"/>
        <end position="218"/>
    </location>
</feature>
<feature type="compositionally biased region" description="Basic and acidic residues" evidence="4">
    <location>
        <begin position="247"/>
        <end position="259"/>
    </location>
</feature>
<feature type="splice variant" id="VSP_013120" description="In isoform 2." evidence="8">
    <location>
        <begin position="108"/>
        <end position="165"/>
    </location>
</feature>
<feature type="sequence variant" id="VAR_082245" description="In MRT70; results in highly reduced transcript levels." evidence="7">
    <location>
        <begin position="69"/>
        <end position="334"/>
    </location>
</feature>
<feature type="sequence variant" id="VAR_082246" description="In MRT70." evidence="6">
    <location>
        <begin position="90"/>
        <end position="334"/>
    </location>
</feature>
<feature type="sequence conflict" description="In Ref. 3; AAF64267." evidence="9" ref="3">
    <original>EK</original>
    <variation>GE</variation>
    <location>
        <begin position="150"/>
        <end position="151"/>
    </location>
</feature>